<protein>
    <recommendedName>
        <fullName evidence="1">Phosphoribosylglycinamide formyltransferase</fullName>
        <ecNumber evidence="1">2.1.2.2</ecNumber>
    </recommendedName>
    <alternativeName>
        <fullName evidence="1">5'-phosphoribosylglycinamide transformylase</fullName>
    </alternativeName>
    <alternativeName>
        <fullName evidence="1">GAR transformylase</fullName>
        <shortName evidence="1">GART</shortName>
    </alternativeName>
</protein>
<evidence type="ECO:0000255" key="1">
    <source>
        <dbReference type="HAMAP-Rule" id="MF_01930"/>
    </source>
</evidence>
<name>PUR3_STAAW</name>
<sequence>MVKIAIFASGSGSNFENIVEHVESGKLENIEVTALYTDHQNAFCIDRAKKHDIPVYINEPKQFDSKAAYEQHLVSLLNEDKVEWIILAGYMRLIGPDLLASFEGKILNIHPSLLPKYKGIDAIGQAYHSGDTITGSTVHYVDCGMDTGEIIEQRQCDIRPDDSKEQLEEKVKKLEYELYPSVIAKIVK</sequence>
<reference key="1">
    <citation type="journal article" date="2002" name="Lancet">
        <title>Genome and virulence determinants of high virulence community-acquired MRSA.</title>
        <authorList>
            <person name="Baba T."/>
            <person name="Takeuchi F."/>
            <person name="Kuroda M."/>
            <person name="Yuzawa H."/>
            <person name="Aoki K."/>
            <person name="Oguchi A."/>
            <person name="Nagai Y."/>
            <person name="Iwama N."/>
            <person name="Asano K."/>
            <person name="Naimi T."/>
            <person name="Kuroda H."/>
            <person name="Cui L."/>
            <person name="Yamamoto K."/>
            <person name="Hiramatsu K."/>
        </authorList>
    </citation>
    <scope>NUCLEOTIDE SEQUENCE [LARGE SCALE GENOMIC DNA]</scope>
    <source>
        <strain>MW2</strain>
    </source>
</reference>
<organism>
    <name type="scientific">Staphylococcus aureus (strain MW2)</name>
    <dbReference type="NCBI Taxonomy" id="196620"/>
    <lineage>
        <taxon>Bacteria</taxon>
        <taxon>Bacillati</taxon>
        <taxon>Bacillota</taxon>
        <taxon>Bacilli</taxon>
        <taxon>Bacillales</taxon>
        <taxon>Staphylococcaceae</taxon>
        <taxon>Staphylococcus</taxon>
    </lineage>
</organism>
<comment type="function">
    <text evidence="1">Catalyzes the transfer of a formyl group from 10-formyltetrahydrofolate to 5-phospho-ribosyl-glycinamide (GAR), producing 5-phospho-ribosyl-N-formylglycinamide (FGAR) and tetrahydrofolate.</text>
</comment>
<comment type="catalytic activity">
    <reaction evidence="1">
        <text>N(1)-(5-phospho-beta-D-ribosyl)glycinamide + (6R)-10-formyltetrahydrofolate = N(2)-formyl-N(1)-(5-phospho-beta-D-ribosyl)glycinamide + (6S)-5,6,7,8-tetrahydrofolate + H(+)</text>
        <dbReference type="Rhea" id="RHEA:15053"/>
        <dbReference type="ChEBI" id="CHEBI:15378"/>
        <dbReference type="ChEBI" id="CHEBI:57453"/>
        <dbReference type="ChEBI" id="CHEBI:143788"/>
        <dbReference type="ChEBI" id="CHEBI:147286"/>
        <dbReference type="ChEBI" id="CHEBI:195366"/>
        <dbReference type="EC" id="2.1.2.2"/>
    </reaction>
</comment>
<comment type="pathway">
    <text evidence="1">Purine metabolism; IMP biosynthesis via de novo pathway; N(2)-formyl-N(1)-(5-phospho-D-ribosyl)glycinamide from N(1)-(5-phospho-D-ribosyl)glycinamide (10-formyl THF route): step 1/1.</text>
</comment>
<comment type="similarity">
    <text evidence="1">Belongs to the GART family.</text>
</comment>
<gene>
    <name evidence="1" type="primary">purN</name>
    <name type="ordered locus">MW0955</name>
</gene>
<proteinExistence type="inferred from homology"/>
<accession>Q8NX89</accession>
<dbReference type="EC" id="2.1.2.2" evidence="1"/>
<dbReference type="EMBL" id="BA000033">
    <property type="protein sequence ID" value="BAB94820.1"/>
    <property type="molecule type" value="Genomic_DNA"/>
</dbReference>
<dbReference type="RefSeq" id="WP_000238663.1">
    <property type="nucleotide sequence ID" value="NC_003923.1"/>
</dbReference>
<dbReference type="SMR" id="Q8NX89"/>
<dbReference type="KEGG" id="sam:MW0955"/>
<dbReference type="HOGENOM" id="CLU_038395_1_3_9"/>
<dbReference type="UniPathway" id="UPA00074">
    <property type="reaction ID" value="UER00126"/>
</dbReference>
<dbReference type="GO" id="GO:0005829">
    <property type="term" value="C:cytosol"/>
    <property type="evidence" value="ECO:0007669"/>
    <property type="project" value="TreeGrafter"/>
</dbReference>
<dbReference type="GO" id="GO:0004644">
    <property type="term" value="F:phosphoribosylglycinamide formyltransferase activity"/>
    <property type="evidence" value="ECO:0007669"/>
    <property type="project" value="UniProtKB-UniRule"/>
</dbReference>
<dbReference type="GO" id="GO:0006189">
    <property type="term" value="P:'de novo' IMP biosynthetic process"/>
    <property type="evidence" value="ECO:0007669"/>
    <property type="project" value="UniProtKB-UniRule"/>
</dbReference>
<dbReference type="CDD" id="cd08645">
    <property type="entry name" value="FMT_core_GART"/>
    <property type="match status" value="1"/>
</dbReference>
<dbReference type="FunFam" id="3.40.50.170:FF:000014">
    <property type="entry name" value="Phosphoribosylglycinamide formyltransferase"/>
    <property type="match status" value="1"/>
</dbReference>
<dbReference type="Gene3D" id="3.40.50.170">
    <property type="entry name" value="Formyl transferase, N-terminal domain"/>
    <property type="match status" value="1"/>
</dbReference>
<dbReference type="HAMAP" id="MF_01930">
    <property type="entry name" value="PurN"/>
    <property type="match status" value="1"/>
</dbReference>
<dbReference type="InterPro" id="IPR002376">
    <property type="entry name" value="Formyl_transf_N"/>
</dbReference>
<dbReference type="InterPro" id="IPR036477">
    <property type="entry name" value="Formyl_transf_N_sf"/>
</dbReference>
<dbReference type="InterPro" id="IPR004607">
    <property type="entry name" value="GART"/>
</dbReference>
<dbReference type="NCBIfam" id="TIGR00639">
    <property type="entry name" value="PurN"/>
    <property type="match status" value="1"/>
</dbReference>
<dbReference type="PANTHER" id="PTHR43369">
    <property type="entry name" value="PHOSPHORIBOSYLGLYCINAMIDE FORMYLTRANSFERASE"/>
    <property type="match status" value="1"/>
</dbReference>
<dbReference type="PANTHER" id="PTHR43369:SF2">
    <property type="entry name" value="PHOSPHORIBOSYLGLYCINAMIDE FORMYLTRANSFERASE"/>
    <property type="match status" value="1"/>
</dbReference>
<dbReference type="Pfam" id="PF00551">
    <property type="entry name" value="Formyl_trans_N"/>
    <property type="match status" value="1"/>
</dbReference>
<dbReference type="SUPFAM" id="SSF53328">
    <property type="entry name" value="Formyltransferase"/>
    <property type="match status" value="1"/>
</dbReference>
<feature type="chain" id="PRO_0000074950" description="Phosphoribosylglycinamide formyltransferase">
    <location>
        <begin position="1"/>
        <end position="188"/>
    </location>
</feature>
<feature type="active site" description="Proton donor" evidence="1">
    <location>
        <position position="110"/>
    </location>
</feature>
<feature type="binding site" evidence="1">
    <location>
        <begin position="12"/>
        <end position="14"/>
    </location>
    <ligand>
        <name>N(1)-(5-phospho-beta-D-ribosyl)glycinamide</name>
        <dbReference type="ChEBI" id="CHEBI:143788"/>
    </ligand>
</feature>
<feature type="binding site" evidence="1">
    <location>
        <position position="66"/>
    </location>
    <ligand>
        <name>(6R)-10-formyltetrahydrofolate</name>
        <dbReference type="ChEBI" id="CHEBI:195366"/>
    </ligand>
</feature>
<feature type="binding site" evidence="1">
    <location>
        <begin position="91"/>
        <end position="94"/>
    </location>
    <ligand>
        <name>(6R)-10-formyltetrahydrofolate</name>
        <dbReference type="ChEBI" id="CHEBI:195366"/>
    </ligand>
</feature>
<feature type="binding site" evidence="1">
    <location>
        <position position="108"/>
    </location>
    <ligand>
        <name>(6R)-10-formyltetrahydrofolate</name>
        <dbReference type="ChEBI" id="CHEBI:195366"/>
    </ligand>
</feature>
<feature type="site" description="Raises pKa of active site His" evidence="1">
    <location>
        <position position="146"/>
    </location>
</feature>
<keyword id="KW-0658">Purine biosynthesis</keyword>
<keyword id="KW-0808">Transferase</keyword>